<accession>A0A1E5RIW9</accession>
<reference key="1">
    <citation type="journal article" date="2016" name="Genome Announc.">
        <title>Genome sequences of three species of Hanseniaspora isolated from spontaneous wine fermentations.</title>
        <authorList>
            <person name="Sternes P.R."/>
            <person name="Lee D."/>
            <person name="Kutyna D.R."/>
            <person name="Borneman A.R."/>
        </authorList>
    </citation>
    <scope>NUCLEOTIDE SEQUENCE [LARGE SCALE GENOMIC DNA]</scope>
    <source>
        <strain>AWRI3580</strain>
    </source>
</reference>
<reference key="2">
    <citation type="journal article" date="2017" name="Metab. Eng.">
        <title>Ethyl acetate production by the elusive alcohol acetyltransferase from yeast.</title>
        <authorList>
            <person name="Kruis A.J."/>
            <person name="Levisson M."/>
            <person name="Mars A.E."/>
            <person name="van der Ploeg M."/>
            <person name="Garces Daza F."/>
            <person name="Ellena V."/>
            <person name="Kengen S.W.M."/>
            <person name="van der Oost J."/>
            <person name="Weusthuis R.A."/>
        </authorList>
    </citation>
    <scope>FUNCTION</scope>
    <scope>CATALYTIC ACTIVITY</scope>
    <source>
        <strain>CECT 11105</strain>
    </source>
</reference>
<feature type="transit peptide" description="Mitochondrion" evidence="2">
    <location>
        <begin position="1"/>
        <end position="19"/>
    </location>
</feature>
<feature type="chain" id="PRO_0000446179" description="Ethanol acetyltransferase 2">
    <location>
        <begin position="20"/>
        <end position="348"/>
    </location>
</feature>
<feature type="domain" description="AB hydrolase-1" evidence="2">
    <location>
        <begin position="49"/>
        <end position="305"/>
    </location>
</feature>
<feature type="active site" description="Charge relay system" evidence="1">
    <location>
        <position position="121"/>
    </location>
</feature>
<feature type="active site" description="Charge relay system" evidence="1">
    <location>
        <position position="145"/>
    </location>
</feature>
<feature type="active site" description="Charge relay system" evidence="1">
    <location>
        <position position="294"/>
    </location>
</feature>
<feature type="unsure residue" description="E or Q" evidence="5">
    <location>
        <position position="89"/>
    </location>
</feature>
<proteinExistence type="evidence at protein level"/>
<dbReference type="EC" id="2.3.1.268"/>
<dbReference type="EC" id="3.1.2.1"/>
<dbReference type="EC" id="3.1.1.-"/>
<dbReference type="EMBL" id="LPNN01000005">
    <property type="protein sequence ID" value="OEJ86816.1"/>
    <property type="molecule type" value="Genomic_DNA"/>
</dbReference>
<dbReference type="STRING" id="29833.A0A1E5RIW9"/>
<dbReference type="ESTHER" id="hanuv-a0a0f4x9n5">
    <property type="family name" value="ABHD11-Acetyl_transferase"/>
</dbReference>
<dbReference type="VEuPathDB" id="FungiDB:AWRI3580_g2626"/>
<dbReference type="OrthoDB" id="8119704at2759"/>
<dbReference type="Proteomes" id="UP000095358">
    <property type="component" value="Unassembled WGS sequence"/>
</dbReference>
<dbReference type="GO" id="GO:0005739">
    <property type="term" value="C:mitochondrion"/>
    <property type="evidence" value="ECO:0007669"/>
    <property type="project" value="UniProtKB-SubCell"/>
</dbReference>
<dbReference type="GO" id="GO:0003986">
    <property type="term" value="F:acetyl-CoA hydrolase activity"/>
    <property type="evidence" value="ECO:0007669"/>
    <property type="project" value="UniProtKB-EC"/>
</dbReference>
<dbReference type="GO" id="GO:0052689">
    <property type="term" value="F:carboxylic ester hydrolase activity"/>
    <property type="evidence" value="ECO:0007669"/>
    <property type="project" value="TreeGrafter"/>
</dbReference>
<dbReference type="GO" id="GO:0016740">
    <property type="term" value="F:transferase activity"/>
    <property type="evidence" value="ECO:0007669"/>
    <property type="project" value="UniProtKB-KW"/>
</dbReference>
<dbReference type="Gene3D" id="3.40.50.1820">
    <property type="entry name" value="alpha/beta hydrolase"/>
    <property type="match status" value="1"/>
</dbReference>
<dbReference type="InterPro" id="IPR000073">
    <property type="entry name" value="AB_hydrolase_1"/>
</dbReference>
<dbReference type="InterPro" id="IPR029058">
    <property type="entry name" value="AB_hydrolase_fold"/>
</dbReference>
<dbReference type="PANTHER" id="PTHR46118">
    <property type="entry name" value="PROTEIN ABHD11"/>
    <property type="match status" value="1"/>
</dbReference>
<dbReference type="PANTHER" id="PTHR46118:SF4">
    <property type="entry name" value="PROTEIN ABHD11"/>
    <property type="match status" value="1"/>
</dbReference>
<dbReference type="Pfam" id="PF00561">
    <property type="entry name" value="Abhydrolase_1"/>
    <property type="match status" value="1"/>
</dbReference>
<dbReference type="SUPFAM" id="SSF53474">
    <property type="entry name" value="alpha/beta-Hydrolases"/>
    <property type="match status" value="1"/>
</dbReference>
<gene>
    <name type="primary">EAT2</name>
    <name type="ORF">AWRI3580_g2626</name>
</gene>
<keyword id="KW-0378">Hydrolase</keyword>
<keyword id="KW-0496">Mitochondrion</keyword>
<keyword id="KW-1185">Reference proteome</keyword>
<keyword id="KW-0808">Transferase</keyword>
<keyword id="KW-0809">Transit peptide</keyword>
<protein>
    <recommendedName>
        <fullName>Ethanol acetyltransferase 2</fullName>
        <ecNumber>2.3.1.268</ecNumber>
    </recommendedName>
    <alternativeName>
        <fullName>Acetyl-CoA hydrolase</fullName>
        <ecNumber>3.1.2.1</ecNumber>
    </alternativeName>
    <alternativeName>
        <fullName>Acetyl-CoA thioesterase</fullName>
    </alternativeName>
    <alternativeName>
        <fullName>Alcohol acetyltransferase</fullName>
        <shortName>AAT</shortName>
    </alternativeName>
    <alternativeName>
        <fullName>Ethyl acetate esterase</fullName>
        <ecNumber>3.1.1.-</ecNumber>
    </alternativeName>
</protein>
<evidence type="ECO:0000250" key="1">
    <source>
        <dbReference type="UniProtKB" id="A0A1E3P8S6"/>
    </source>
</evidence>
<evidence type="ECO:0000255" key="2"/>
<evidence type="ECO:0000269" key="3">
    <source>
    </source>
</evidence>
<evidence type="ECO:0000305" key="4"/>
<evidence type="ECO:0000312" key="5">
    <source>
        <dbReference type="EMBL" id="OEJ86816.1"/>
    </source>
</evidence>
<sequence>MIFNSLSIKRLSSTXTSLPFKKHAKLNFDLYSPQHSTYGKLPYHCQEPIIFLHGIYGYSKSFNSDYQQLSNLLHTPIYSVDMRCHGETENCLPFTYDALAGDLDNFVITHNIKKPSLIGFSLGAKLAMLAILKSPHLYTSGVIVDNVPLKQPRIKPNLTAFGNALRDSVFKSGVKRNDPSWISKSFNVMKDVCSDMPANFYLLHNIQPKPSYLKKYSTEESENSLFCKVPIRELSSHVVENVPDWPEEDLAGVKTDVPILVVKASTSGFVNEDGVAALXKHFSDFTIVEVAGTHLVMKERPQEYISAVGRWFYQQNCKKAAALTKAKKTNDQKITQQPILSYKKIEIA</sequence>
<comment type="function">
    <text evidence="1 3">Alcohol acetyltransferase that catalyzes the synthesis of ethyl acetate from ethanol and acetyl-CoA (PubMed:28356220). Can also function as a thioesterase by hydrolyzing acetyl-CoA in the absence of ethanol, as well as esterase hydrolyzing ethyl acetate (By similarity).</text>
</comment>
<comment type="catalytic activity">
    <reaction evidence="3">
        <text>ethanol + acetyl-CoA = ethyl acetate + CoA</text>
        <dbReference type="Rhea" id="RHEA:55972"/>
        <dbReference type="ChEBI" id="CHEBI:16236"/>
        <dbReference type="ChEBI" id="CHEBI:27750"/>
        <dbReference type="ChEBI" id="CHEBI:57287"/>
        <dbReference type="ChEBI" id="CHEBI:57288"/>
        <dbReference type="EC" id="2.3.1.268"/>
    </reaction>
</comment>
<comment type="catalytic activity">
    <reaction evidence="1">
        <text>acetyl-CoA + H2O = acetate + CoA + H(+)</text>
        <dbReference type="Rhea" id="RHEA:20289"/>
        <dbReference type="ChEBI" id="CHEBI:15377"/>
        <dbReference type="ChEBI" id="CHEBI:15378"/>
        <dbReference type="ChEBI" id="CHEBI:30089"/>
        <dbReference type="ChEBI" id="CHEBI:57287"/>
        <dbReference type="ChEBI" id="CHEBI:57288"/>
        <dbReference type="EC" id="3.1.2.1"/>
    </reaction>
</comment>
<comment type="catalytic activity">
    <reaction evidence="1">
        <text>ethyl acetate + H2O = ethanol + acetate + H(+)</text>
        <dbReference type="Rhea" id="RHEA:58148"/>
        <dbReference type="ChEBI" id="CHEBI:15377"/>
        <dbReference type="ChEBI" id="CHEBI:15378"/>
        <dbReference type="ChEBI" id="CHEBI:16236"/>
        <dbReference type="ChEBI" id="CHEBI:27750"/>
        <dbReference type="ChEBI" id="CHEBI:30089"/>
    </reaction>
</comment>
<comment type="subcellular location">
    <subcellularLocation>
        <location evidence="1">Mitochondrion</location>
    </subcellularLocation>
</comment>
<comment type="similarity">
    <text evidence="4">Belongs to the AB hydrolase superfamily.</text>
</comment>
<name>EAT2_HANUV</name>
<organism>
    <name type="scientific">Hanseniaspora uvarum</name>
    <name type="common">Yeast</name>
    <name type="synonym">Kloeckera apiculata</name>
    <dbReference type="NCBI Taxonomy" id="29833"/>
    <lineage>
        <taxon>Eukaryota</taxon>
        <taxon>Fungi</taxon>
        <taxon>Dikarya</taxon>
        <taxon>Ascomycota</taxon>
        <taxon>Saccharomycotina</taxon>
        <taxon>Saccharomycetes</taxon>
        <taxon>Saccharomycodales</taxon>
        <taxon>Saccharomycodaceae</taxon>
        <taxon>Hanseniaspora</taxon>
    </lineage>
</organism>